<organism>
    <name type="scientific">Vibrio vulnificus (strain CMCP6)</name>
    <dbReference type="NCBI Taxonomy" id="216895"/>
    <lineage>
        <taxon>Bacteria</taxon>
        <taxon>Pseudomonadati</taxon>
        <taxon>Pseudomonadota</taxon>
        <taxon>Gammaproteobacteria</taxon>
        <taxon>Vibrionales</taxon>
        <taxon>Vibrionaceae</taxon>
        <taxon>Vibrio</taxon>
    </lineage>
</organism>
<proteinExistence type="inferred from homology"/>
<protein>
    <recommendedName>
        <fullName evidence="1">Phosphoribosylaminoimidazole-succinocarboxamide synthase</fullName>
        <ecNumber evidence="1">6.3.2.6</ecNumber>
    </recommendedName>
    <alternativeName>
        <fullName evidence="1">SAICAR synthetase</fullName>
    </alternativeName>
</protein>
<feature type="chain" id="PRO_0000100897" description="Phosphoribosylaminoimidazole-succinocarboxamide synthase">
    <location>
        <begin position="1"/>
        <end position="367"/>
    </location>
</feature>
<name>PUR7_VIBVU</name>
<reference key="1">
    <citation type="submission" date="2002-12" db="EMBL/GenBank/DDBJ databases">
        <title>Complete genome sequence of Vibrio vulnificus CMCP6.</title>
        <authorList>
            <person name="Rhee J.H."/>
            <person name="Kim S.Y."/>
            <person name="Chung S.S."/>
            <person name="Kim J.J."/>
            <person name="Moon Y.H."/>
            <person name="Jeong H."/>
            <person name="Choy H.E."/>
        </authorList>
    </citation>
    <scope>NUCLEOTIDE SEQUENCE [LARGE SCALE GENOMIC DNA]</scope>
    <source>
        <strain>CMCP6</strain>
    </source>
</reference>
<accession>Q8D915</accession>
<keyword id="KW-0067">ATP-binding</keyword>
<keyword id="KW-0436">Ligase</keyword>
<keyword id="KW-0547">Nucleotide-binding</keyword>
<keyword id="KW-0658">Purine biosynthesis</keyword>
<evidence type="ECO:0000255" key="1">
    <source>
        <dbReference type="HAMAP-Rule" id="MF_00137"/>
    </source>
</evidence>
<dbReference type="EC" id="6.3.2.6" evidence="1"/>
<dbReference type="EMBL" id="AE016795">
    <property type="protein sequence ID" value="AAO11136.1"/>
    <property type="molecule type" value="Genomic_DNA"/>
</dbReference>
<dbReference type="RefSeq" id="WP_011080630.1">
    <property type="nucleotide sequence ID" value="NC_004459.3"/>
</dbReference>
<dbReference type="SMR" id="Q8D915"/>
<dbReference type="KEGG" id="vvu:VV1_2797"/>
<dbReference type="HOGENOM" id="CLU_064197_0_0_6"/>
<dbReference type="UniPathway" id="UPA00074">
    <property type="reaction ID" value="UER00131"/>
</dbReference>
<dbReference type="Proteomes" id="UP000002275">
    <property type="component" value="Chromosome 1"/>
</dbReference>
<dbReference type="GO" id="GO:0005737">
    <property type="term" value="C:cytoplasm"/>
    <property type="evidence" value="ECO:0007669"/>
    <property type="project" value="TreeGrafter"/>
</dbReference>
<dbReference type="GO" id="GO:0005524">
    <property type="term" value="F:ATP binding"/>
    <property type="evidence" value="ECO:0007669"/>
    <property type="project" value="UniProtKB-KW"/>
</dbReference>
<dbReference type="GO" id="GO:0004639">
    <property type="term" value="F:phosphoribosylaminoimidazolesuccinocarboxamide synthase activity"/>
    <property type="evidence" value="ECO:0007669"/>
    <property type="project" value="UniProtKB-UniRule"/>
</dbReference>
<dbReference type="GO" id="GO:0006189">
    <property type="term" value="P:'de novo' IMP biosynthetic process"/>
    <property type="evidence" value="ECO:0007669"/>
    <property type="project" value="UniProtKB-UniRule"/>
</dbReference>
<dbReference type="CDD" id="cd01414">
    <property type="entry name" value="SAICAR_synt_Sc"/>
    <property type="match status" value="1"/>
</dbReference>
<dbReference type="Gene3D" id="3.30.470.20">
    <property type="entry name" value="ATP-grasp fold, B domain"/>
    <property type="match status" value="1"/>
</dbReference>
<dbReference type="Gene3D" id="3.30.200.20">
    <property type="entry name" value="Phosphorylase Kinase, domain 1"/>
    <property type="match status" value="1"/>
</dbReference>
<dbReference type="HAMAP" id="MF_00137">
    <property type="entry name" value="SAICAR_synth"/>
    <property type="match status" value="1"/>
</dbReference>
<dbReference type="InterPro" id="IPR028923">
    <property type="entry name" value="SAICAR_synt/ADE2_N"/>
</dbReference>
<dbReference type="InterPro" id="IPR014106">
    <property type="entry name" value="SAICAR_synthase_Vibrio-typ"/>
</dbReference>
<dbReference type="InterPro" id="IPR018236">
    <property type="entry name" value="SAICAR_synthetase_CS"/>
</dbReference>
<dbReference type="NCBIfam" id="NF010567">
    <property type="entry name" value="PRK13960.1"/>
    <property type="match status" value="1"/>
</dbReference>
<dbReference type="NCBIfam" id="TIGR02735">
    <property type="entry name" value="purC_vibrio"/>
    <property type="match status" value="1"/>
</dbReference>
<dbReference type="PANTHER" id="PTHR43700">
    <property type="entry name" value="PHOSPHORIBOSYLAMINOIMIDAZOLE-SUCCINOCARBOXAMIDE SYNTHASE"/>
    <property type="match status" value="1"/>
</dbReference>
<dbReference type="PANTHER" id="PTHR43700:SF1">
    <property type="entry name" value="PHOSPHORIBOSYLAMINOIMIDAZOLE-SUCCINOCARBOXAMIDE SYNTHASE"/>
    <property type="match status" value="1"/>
</dbReference>
<dbReference type="Pfam" id="PF01259">
    <property type="entry name" value="SAICAR_synt"/>
    <property type="match status" value="1"/>
</dbReference>
<dbReference type="SUPFAM" id="SSF56104">
    <property type="entry name" value="SAICAR synthase-like"/>
    <property type="match status" value="1"/>
</dbReference>
<dbReference type="PROSITE" id="PS01057">
    <property type="entry name" value="SAICAR_SYNTHETASE_1"/>
    <property type="match status" value="1"/>
</dbReference>
<gene>
    <name evidence="1" type="primary">purC</name>
    <name type="ordered locus">VV1_2797</name>
</gene>
<sequence>MSLADQVLAVNDDLPIRTDKPVHSGKVRSVYWLTEEDSARLIKEKGYNVAPDAPLAIMVISDRISAFDCIWHGEHGLNGVPGKGAALNAISNHWFGLFKENGLADSHILDIPHPFVWIVQKAKPVKIEAICRKYITGSMWRAYEKGEREFCGIQLPEGLEKDKALPDLLMTPSTKGILKGIPGVPEADDVNITRQNIADNFAAFNFSSADDIALYEKLLKDGFGVISEALANVGQIFVDTKFEFGYVTDAAGNEKLIYMDEVGTPDSSRIWDAQEYQAGKIVENSKEGFRQFLLNYFPDPDILLNKDRMPEREALARDNELPEEALMAVSRTYINIAEKITGSAIVLSDNPKQEIIDILGREYGLID</sequence>
<comment type="catalytic activity">
    <reaction evidence="1">
        <text>5-amino-1-(5-phospho-D-ribosyl)imidazole-4-carboxylate + L-aspartate + ATP = (2S)-2-[5-amino-1-(5-phospho-beta-D-ribosyl)imidazole-4-carboxamido]succinate + ADP + phosphate + 2 H(+)</text>
        <dbReference type="Rhea" id="RHEA:22628"/>
        <dbReference type="ChEBI" id="CHEBI:15378"/>
        <dbReference type="ChEBI" id="CHEBI:29991"/>
        <dbReference type="ChEBI" id="CHEBI:30616"/>
        <dbReference type="ChEBI" id="CHEBI:43474"/>
        <dbReference type="ChEBI" id="CHEBI:58443"/>
        <dbReference type="ChEBI" id="CHEBI:77657"/>
        <dbReference type="ChEBI" id="CHEBI:456216"/>
        <dbReference type="EC" id="6.3.2.6"/>
    </reaction>
</comment>
<comment type="pathway">
    <text evidence="1">Purine metabolism; IMP biosynthesis via de novo pathway; 5-amino-1-(5-phospho-D-ribosyl)imidazole-4-carboxamide from 5-amino-1-(5-phospho-D-ribosyl)imidazole-4-carboxylate: step 1/2.</text>
</comment>
<comment type="similarity">
    <text evidence="1">Belongs to the SAICAR synthetase family.</text>
</comment>